<organism>
    <name type="scientific">Streptococcus pyogenes serotype M12 (strain MGAS9429)</name>
    <dbReference type="NCBI Taxonomy" id="370551"/>
    <lineage>
        <taxon>Bacteria</taxon>
        <taxon>Bacillati</taxon>
        <taxon>Bacillota</taxon>
        <taxon>Bacilli</taxon>
        <taxon>Lactobacillales</taxon>
        <taxon>Streptococcaceae</taxon>
        <taxon>Streptococcus</taxon>
    </lineage>
</organism>
<comment type="function">
    <text evidence="1">Component of the acetyl coenzyme A carboxylase (ACC) complex. First, biotin carboxylase catalyzes the carboxylation of biotin on its carrier protein (BCCP) and then the CO(2) group is transferred by the carboxyltransferase to acetyl-CoA to form malonyl-CoA.</text>
</comment>
<comment type="catalytic activity">
    <reaction evidence="1">
        <text>N(6)-carboxybiotinyl-L-lysyl-[protein] + acetyl-CoA = N(6)-biotinyl-L-lysyl-[protein] + malonyl-CoA</text>
        <dbReference type="Rhea" id="RHEA:54728"/>
        <dbReference type="Rhea" id="RHEA-COMP:10505"/>
        <dbReference type="Rhea" id="RHEA-COMP:10506"/>
        <dbReference type="ChEBI" id="CHEBI:57288"/>
        <dbReference type="ChEBI" id="CHEBI:57384"/>
        <dbReference type="ChEBI" id="CHEBI:83144"/>
        <dbReference type="ChEBI" id="CHEBI:83145"/>
        <dbReference type="EC" id="2.1.3.15"/>
    </reaction>
</comment>
<comment type="pathway">
    <text evidence="1">Lipid metabolism; malonyl-CoA biosynthesis; malonyl-CoA from acetyl-CoA: step 1/1.</text>
</comment>
<comment type="subunit">
    <text evidence="1">Acetyl-CoA carboxylase is a heterohexamer composed of biotin carboxyl carrier protein (AccB), biotin carboxylase (AccC) and two subunits each of ACCase subunit alpha (AccA) and ACCase subunit beta (AccD).</text>
</comment>
<comment type="subcellular location">
    <subcellularLocation>
        <location evidence="1">Cytoplasm</location>
    </subcellularLocation>
</comment>
<comment type="similarity">
    <text evidence="1">Belongs to the AccA family.</text>
</comment>
<reference key="1">
    <citation type="journal article" date="2006" name="Proc. Natl. Acad. Sci. U.S.A.">
        <title>Molecular genetic anatomy of inter- and intraserotype variation in the human bacterial pathogen group A Streptococcus.</title>
        <authorList>
            <person name="Beres S.B."/>
            <person name="Richter E.W."/>
            <person name="Nagiec M.J."/>
            <person name="Sumby P."/>
            <person name="Porcella S.F."/>
            <person name="DeLeo F.R."/>
            <person name="Musser J.M."/>
        </authorList>
    </citation>
    <scope>NUCLEOTIDE SEQUENCE [LARGE SCALE GENOMIC DNA]</scope>
    <source>
        <strain>MGAS9429</strain>
    </source>
</reference>
<accession>Q1JKF0</accession>
<evidence type="ECO:0000255" key="1">
    <source>
        <dbReference type="HAMAP-Rule" id="MF_00823"/>
    </source>
</evidence>
<evidence type="ECO:0000255" key="2">
    <source>
        <dbReference type="PROSITE-ProRule" id="PRU01137"/>
    </source>
</evidence>
<protein>
    <recommendedName>
        <fullName evidence="1">Acetyl-coenzyme A carboxylase carboxyl transferase subunit alpha</fullName>
        <shortName evidence="1">ACCase subunit alpha</shortName>
        <shortName evidence="1">Acetyl-CoA carboxylase carboxyltransferase subunit alpha</shortName>
        <ecNumber evidence="1">2.1.3.15</ecNumber>
    </recommendedName>
</protein>
<sequence>MTDVSRVLKEARDQGRLTTLDYANLIFDDFMELHGDRHFSDDGAIVGGLAYLAGQPVTVIGIQKGKNLQDNLARNFGQPNPEGYRKALRLMKQAEKFGRPVVTFINTAGAYPGVGAEERGQGEAIAKNLMEMSDLKVPIIAIIIGEGGSGGALALAVADQVWMLENTMYAVLSPEGFASILWKDGSRATEAAELMKITAGELYKMGIVDRIIPEHGYFSSEIVDIIKANLIEQITSLQAKPLDQLLDERYQRFRKY</sequence>
<keyword id="KW-0067">ATP-binding</keyword>
<keyword id="KW-0963">Cytoplasm</keyword>
<keyword id="KW-0275">Fatty acid biosynthesis</keyword>
<keyword id="KW-0276">Fatty acid metabolism</keyword>
<keyword id="KW-0444">Lipid biosynthesis</keyword>
<keyword id="KW-0443">Lipid metabolism</keyword>
<keyword id="KW-0547">Nucleotide-binding</keyword>
<keyword id="KW-0808">Transferase</keyword>
<name>ACCA_STRPC</name>
<proteinExistence type="inferred from homology"/>
<feature type="chain" id="PRO_1000062683" description="Acetyl-coenzyme A carboxylase carboxyl transferase subunit alpha">
    <location>
        <begin position="1"/>
        <end position="256"/>
    </location>
</feature>
<feature type="domain" description="CoA carboxyltransferase C-terminal" evidence="2">
    <location>
        <begin position="1"/>
        <end position="236"/>
    </location>
</feature>
<gene>
    <name evidence="1" type="primary">accA</name>
    <name type="ordered locus">MGAS9429_Spy1486</name>
</gene>
<dbReference type="EC" id="2.1.3.15" evidence="1"/>
<dbReference type="EMBL" id="CP000259">
    <property type="protein sequence ID" value="ABF32673.1"/>
    <property type="molecule type" value="Genomic_DNA"/>
</dbReference>
<dbReference type="RefSeq" id="WP_002988629.1">
    <property type="nucleotide sequence ID" value="NC_008021.1"/>
</dbReference>
<dbReference type="SMR" id="Q1JKF0"/>
<dbReference type="KEGG" id="spk:MGAS9429_Spy1486"/>
<dbReference type="HOGENOM" id="CLU_015486_0_2_9"/>
<dbReference type="UniPathway" id="UPA00655">
    <property type="reaction ID" value="UER00711"/>
</dbReference>
<dbReference type="Proteomes" id="UP000002433">
    <property type="component" value="Chromosome"/>
</dbReference>
<dbReference type="GO" id="GO:0009317">
    <property type="term" value="C:acetyl-CoA carboxylase complex"/>
    <property type="evidence" value="ECO:0007669"/>
    <property type="project" value="InterPro"/>
</dbReference>
<dbReference type="GO" id="GO:0003989">
    <property type="term" value="F:acetyl-CoA carboxylase activity"/>
    <property type="evidence" value="ECO:0007669"/>
    <property type="project" value="InterPro"/>
</dbReference>
<dbReference type="GO" id="GO:0005524">
    <property type="term" value="F:ATP binding"/>
    <property type="evidence" value="ECO:0007669"/>
    <property type="project" value="UniProtKB-KW"/>
</dbReference>
<dbReference type="GO" id="GO:0016743">
    <property type="term" value="F:carboxyl- or carbamoyltransferase activity"/>
    <property type="evidence" value="ECO:0007669"/>
    <property type="project" value="UniProtKB-UniRule"/>
</dbReference>
<dbReference type="GO" id="GO:0006633">
    <property type="term" value="P:fatty acid biosynthetic process"/>
    <property type="evidence" value="ECO:0007669"/>
    <property type="project" value="UniProtKB-KW"/>
</dbReference>
<dbReference type="GO" id="GO:2001295">
    <property type="term" value="P:malonyl-CoA biosynthetic process"/>
    <property type="evidence" value="ECO:0007669"/>
    <property type="project" value="UniProtKB-UniRule"/>
</dbReference>
<dbReference type="Gene3D" id="3.90.226.10">
    <property type="entry name" value="2-enoyl-CoA Hydratase, Chain A, domain 1"/>
    <property type="match status" value="1"/>
</dbReference>
<dbReference type="HAMAP" id="MF_00823">
    <property type="entry name" value="AcetylCoA_CT_alpha"/>
    <property type="match status" value="1"/>
</dbReference>
<dbReference type="InterPro" id="IPR001095">
    <property type="entry name" value="Acetyl_CoA_COase_a_su"/>
</dbReference>
<dbReference type="InterPro" id="IPR029045">
    <property type="entry name" value="ClpP/crotonase-like_dom_sf"/>
</dbReference>
<dbReference type="InterPro" id="IPR011763">
    <property type="entry name" value="COA_CT_C"/>
</dbReference>
<dbReference type="NCBIfam" id="TIGR00513">
    <property type="entry name" value="accA"/>
    <property type="match status" value="1"/>
</dbReference>
<dbReference type="NCBIfam" id="NF041504">
    <property type="entry name" value="AccA_sub"/>
    <property type="match status" value="1"/>
</dbReference>
<dbReference type="NCBIfam" id="NF004344">
    <property type="entry name" value="PRK05724.1"/>
    <property type="match status" value="1"/>
</dbReference>
<dbReference type="NCBIfam" id="NF008971">
    <property type="entry name" value="PRK12319.1"/>
    <property type="match status" value="1"/>
</dbReference>
<dbReference type="PANTHER" id="PTHR42853">
    <property type="entry name" value="ACETYL-COENZYME A CARBOXYLASE CARBOXYL TRANSFERASE SUBUNIT ALPHA"/>
    <property type="match status" value="1"/>
</dbReference>
<dbReference type="PANTHER" id="PTHR42853:SF3">
    <property type="entry name" value="ACETYL-COENZYME A CARBOXYLASE CARBOXYL TRANSFERASE SUBUNIT ALPHA, CHLOROPLASTIC"/>
    <property type="match status" value="1"/>
</dbReference>
<dbReference type="Pfam" id="PF03255">
    <property type="entry name" value="ACCA"/>
    <property type="match status" value="1"/>
</dbReference>
<dbReference type="PRINTS" id="PR01069">
    <property type="entry name" value="ACCCTRFRASEA"/>
</dbReference>
<dbReference type="SUPFAM" id="SSF52096">
    <property type="entry name" value="ClpP/crotonase"/>
    <property type="match status" value="1"/>
</dbReference>
<dbReference type="PROSITE" id="PS50989">
    <property type="entry name" value="COA_CT_CTER"/>
    <property type="match status" value="1"/>
</dbReference>